<name>LOLC_ECOLI</name>
<sequence length="399" mass="43264">MYQPVALFIGLRYMRGRAADRFGRFVSWLSTIGITLGVMALVTVLSVMNGFERELQNNILGLMPQAILSSEHGSLNPQQLPETAVKLDGVNRVAPITTGDVVLQSARSVAVGVMLGIDPAQKDPLTPYLVNVKQTDLEPGKYNVILGEQLASQLGVNRGDQIRVMVPSASQFTPMGRIPSQRLFNVIGTFAANSEVDGYEMLVNIEDASRLMRYPAGNITGWRLWLDEPLKVDSLSQQKLPEGSKWQDWRDRKGELFQAVRMEKNMMGLLLSLIVAVAAFNIITSLGLMVMEKQGEVAILQTQGLTPRQIMMVFMVQGASAGIIGAILGAALGALLASQLNNLMPIIGVLLDGAALPVAIEPLQVIVIALVAMAIALLSTLYPSWRAAATQPAEALRYE</sequence>
<dbReference type="EMBL" id="U00096">
    <property type="protein sequence ID" value="AAC74200.1"/>
    <property type="molecule type" value="Genomic_DNA"/>
</dbReference>
<dbReference type="EMBL" id="AP009048">
    <property type="protein sequence ID" value="BAA35936.2"/>
    <property type="molecule type" value="Genomic_DNA"/>
</dbReference>
<dbReference type="PIR" id="A64856">
    <property type="entry name" value="A64856"/>
</dbReference>
<dbReference type="RefSeq" id="NP_415634.1">
    <property type="nucleotide sequence ID" value="NC_000913.3"/>
</dbReference>
<dbReference type="RefSeq" id="WP_000284714.1">
    <property type="nucleotide sequence ID" value="NZ_STEB01000016.1"/>
</dbReference>
<dbReference type="PDB" id="5NAA">
    <property type="method" value="X-ray"/>
    <property type="resolution" value="1.88 A"/>
    <property type="chains" value="A/B=48-266"/>
</dbReference>
<dbReference type="PDB" id="6F3Z">
    <property type="method" value="X-ray"/>
    <property type="resolution" value="2.00 A"/>
    <property type="chains" value="A/C=48-266"/>
</dbReference>
<dbReference type="PDB" id="6F49">
    <property type="method" value="X-ray"/>
    <property type="resolution" value="2.02 A"/>
    <property type="chains" value="A/B/C/D=48-166, A/B/C/D=180-266"/>
</dbReference>
<dbReference type="PDB" id="7ARH">
    <property type="method" value="EM"/>
    <property type="resolution" value="3.30 A"/>
    <property type="chains" value="C=1-399"/>
</dbReference>
<dbReference type="PDB" id="7ARI">
    <property type="method" value="EM"/>
    <property type="resolution" value="3.40 A"/>
    <property type="chains" value="C=1-399"/>
</dbReference>
<dbReference type="PDB" id="7ARJ">
    <property type="method" value="EM"/>
    <property type="resolution" value="3.20 A"/>
    <property type="chains" value="C=1-399"/>
</dbReference>
<dbReference type="PDB" id="7ARK">
    <property type="method" value="EM"/>
    <property type="resolution" value="4.10 A"/>
    <property type="chains" value="C=1-399"/>
</dbReference>
<dbReference type="PDB" id="7ARL">
    <property type="method" value="EM"/>
    <property type="resolution" value="3.20 A"/>
    <property type="chains" value="C=1-399"/>
</dbReference>
<dbReference type="PDB" id="7ARM">
    <property type="method" value="EM"/>
    <property type="resolution" value="3.60 A"/>
    <property type="chains" value="C=1-399"/>
</dbReference>
<dbReference type="PDB" id="7MDX">
    <property type="method" value="EM"/>
    <property type="resolution" value="3.80 A"/>
    <property type="chains" value="A=2-394"/>
</dbReference>
<dbReference type="PDB" id="7MDY">
    <property type="method" value="EM"/>
    <property type="resolution" value="3.50 A"/>
    <property type="chains" value="A=1-399"/>
</dbReference>
<dbReference type="PDB" id="7V8I">
    <property type="method" value="EM"/>
    <property type="resolution" value="3.60 A"/>
    <property type="chains" value="C=1-399"/>
</dbReference>
<dbReference type="PDB" id="7V8L">
    <property type="method" value="EM"/>
    <property type="resolution" value="3.50 A"/>
    <property type="chains" value="C=1-399"/>
</dbReference>
<dbReference type="PDB" id="7V8M">
    <property type="method" value="EM"/>
    <property type="resolution" value="4.20 A"/>
    <property type="chains" value="C=1-399"/>
</dbReference>
<dbReference type="PDB" id="9GRC">
    <property type="method" value="EM"/>
    <property type="resolution" value="3.50 A"/>
    <property type="chains" value="C=1-399"/>
</dbReference>
<dbReference type="PDB" id="9GVK">
    <property type="method" value="EM"/>
    <property type="resolution" value="3.50 A"/>
    <property type="chains" value="C=1-399"/>
</dbReference>
<dbReference type="PDBsum" id="5NAA"/>
<dbReference type="PDBsum" id="6F3Z"/>
<dbReference type="PDBsum" id="6F49"/>
<dbReference type="PDBsum" id="7ARH"/>
<dbReference type="PDBsum" id="7ARI"/>
<dbReference type="PDBsum" id="7ARJ"/>
<dbReference type="PDBsum" id="7ARK"/>
<dbReference type="PDBsum" id="7ARL"/>
<dbReference type="PDBsum" id="7ARM"/>
<dbReference type="PDBsum" id="7MDX"/>
<dbReference type="PDBsum" id="7MDY"/>
<dbReference type="PDBsum" id="7V8I"/>
<dbReference type="PDBsum" id="7V8L"/>
<dbReference type="PDBsum" id="7V8M"/>
<dbReference type="PDBsum" id="9GRC"/>
<dbReference type="PDBsum" id="9GVK"/>
<dbReference type="EMDB" id="EMD-23783"/>
<dbReference type="EMDB" id="EMD-31802"/>
<dbReference type="EMDB" id="EMD-31803"/>
<dbReference type="EMDB" id="EMD-31804"/>
<dbReference type="EMDB" id="EMD-51520"/>
<dbReference type="EMDB" id="EMD-51637"/>
<dbReference type="SMR" id="P0ADC3"/>
<dbReference type="BioGRID" id="4261911">
    <property type="interactions" value="382"/>
</dbReference>
<dbReference type="ComplexPortal" id="CPX-4262">
    <property type="entry name" value="LolCDE lipoprotein ABC transporter complex"/>
</dbReference>
<dbReference type="DIP" id="DIP-58651N"/>
<dbReference type="FunCoup" id="P0ADC3">
    <property type="interactions" value="269"/>
</dbReference>
<dbReference type="IntAct" id="P0ADC3">
    <property type="interactions" value="3"/>
</dbReference>
<dbReference type="STRING" id="511145.b1116"/>
<dbReference type="TCDB" id="3.A.1.125.1">
    <property type="family name" value="the atp-binding cassette (abc) superfamily"/>
</dbReference>
<dbReference type="jPOST" id="P0ADC3"/>
<dbReference type="PaxDb" id="511145-b1116"/>
<dbReference type="EnsemblBacteria" id="AAC74200">
    <property type="protein sequence ID" value="AAC74200"/>
    <property type="gene ID" value="b1116"/>
</dbReference>
<dbReference type="GeneID" id="93776292"/>
<dbReference type="GeneID" id="945673"/>
<dbReference type="KEGG" id="ecj:JW5161"/>
<dbReference type="KEGG" id="eco:b1116"/>
<dbReference type="KEGG" id="ecoc:C3026_06725"/>
<dbReference type="PATRIC" id="fig|1411691.4.peg.1151"/>
<dbReference type="EchoBASE" id="EB3213"/>
<dbReference type="eggNOG" id="COG4591">
    <property type="taxonomic scope" value="Bacteria"/>
</dbReference>
<dbReference type="HOGENOM" id="CLU_000604_8_1_6"/>
<dbReference type="InParanoid" id="P0ADC3"/>
<dbReference type="OMA" id="QIMAVFM"/>
<dbReference type="OrthoDB" id="9808461at2"/>
<dbReference type="PhylomeDB" id="P0ADC3"/>
<dbReference type="BioCyc" id="EcoCyc:YCFU-MONOMER"/>
<dbReference type="BioCyc" id="MetaCyc:YCFU-MONOMER"/>
<dbReference type="PRO" id="PR:P0ADC3"/>
<dbReference type="Proteomes" id="UP000000625">
    <property type="component" value="Chromosome"/>
</dbReference>
<dbReference type="GO" id="GO:0043190">
    <property type="term" value="C:ATP-binding cassette (ABC) transporter complex"/>
    <property type="evidence" value="ECO:0000353"/>
    <property type="project" value="ComplexPortal"/>
</dbReference>
<dbReference type="GO" id="GO:0030288">
    <property type="term" value="C:outer membrane-bounded periplasmic space"/>
    <property type="evidence" value="ECO:0000314"/>
    <property type="project" value="EcoCyc"/>
</dbReference>
<dbReference type="GO" id="GO:0005886">
    <property type="term" value="C:plasma membrane"/>
    <property type="evidence" value="ECO:0000314"/>
    <property type="project" value="EcoCyc"/>
</dbReference>
<dbReference type="GO" id="GO:0098797">
    <property type="term" value="C:plasma membrane protein complex"/>
    <property type="evidence" value="ECO:0000314"/>
    <property type="project" value="EcoCyc"/>
</dbReference>
<dbReference type="GO" id="GO:0140306">
    <property type="term" value="F:lipoprotein releasing activity"/>
    <property type="evidence" value="ECO:0000314"/>
    <property type="project" value="EcoCyc"/>
</dbReference>
<dbReference type="GO" id="GO:0044874">
    <property type="term" value="P:lipoprotein localization to outer membrane"/>
    <property type="evidence" value="ECO:0000314"/>
    <property type="project" value="EcoCyc"/>
</dbReference>
<dbReference type="GO" id="GO:0042953">
    <property type="term" value="P:lipoprotein transport"/>
    <property type="evidence" value="ECO:0007669"/>
    <property type="project" value="InterPro"/>
</dbReference>
<dbReference type="GO" id="GO:0089705">
    <property type="term" value="P:protein localization to outer membrane"/>
    <property type="evidence" value="ECO:0000315"/>
    <property type="project" value="CACAO"/>
</dbReference>
<dbReference type="InterPro" id="IPR003838">
    <property type="entry name" value="ABC3_permease_C"/>
</dbReference>
<dbReference type="InterPro" id="IPR051447">
    <property type="entry name" value="Lipoprotein-release_system"/>
</dbReference>
<dbReference type="InterPro" id="IPR011925">
    <property type="entry name" value="LolCE_TM"/>
</dbReference>
<dbReference type="InterPro" id="IPR025857">
    <property type="entry name" value="MacB_PCD"/>
</dbReference>
<dbReference type="NCBIfam" id="TIGR02212">
    <property type="entry name" value="lolCE"/>
    <property type="match status" value="1"/>
</dbReference>
<dbReference type="NCBIfam" id="NF008076">
    <property type="entry name" value="PRK10814.1"/>
    <property type="match status" value="1"/>
</dbReference>
<dbReference type="PANTHER" id="PTHR30489:SF8">
    <property type="entry name" value="LIPOPROTEIN-RELEASING SYSTEM TRANSMEMBRANE PROTEIN LOLC"/>
    <property type="match status" value="1"/>
</dbReference>
<dbReference type="PANTHER" id="PTHR30489">
    <property type="entry name" value="LIPOPROTEIN-RELEASING SYSTEM TRANSMEMBRANE PROTEIN LOLE"/>
    <property type="match status" value="1"/>
</dbReference>
<dbReference type="Pfam" id="PF02687">
    <property type="entry name" value="FtsX"/>
    <property type="match status" value="1"/>
</dbReference>
<dbReference type="Pfam" id="PF12704">
    <property type="entry name" value="MacB_PCD"/>
    <property type="match status" value="1"/>
</dbReference>
<evidence type="ECO:0000255" key="1"/>
<evidence type="ECO:0000305" key="2"/>
<evidence type="ECO:0007829" key="3">
    <source>
        <dbReference type="PDB" id="5NAA"/>
    </source>
</evidence>
<evidence type="ECO:0007829" key="4">
    <source>
        <dbReference type="PDB" id="6F3Z"/>
    </source>
</evidence>
<evidence type="ECO:0007829" key="5">
    <source>
        <dbReference type="PDB" id="7ARI"/>
    </source>
</evidence>
<evidence type="ECO:0007829" key="6">
    <source>
        <dbReference type="PDB" id="7ARJ"/>
    </source>
</evidence>
<evidence type="ECO:0007829" key="7">
    <source>
        <dbReference type="PDB" id="7MDY"/>
    </source>
</evidence>
<protein>
    <recommendedName>
        <fullName>Lipoprotein-releasing system transmembrane protein LolC</fullName>
    </recommendedName>
</protein>
<comment type="function">
    <text>Part of an ATP-dependent transport system LolCDE responsible for the release of lipoproteins targeted to the outer membrane from the inner membrane. Such a release is dependent of the sorting-signal (absence of an Asp at position 2 of the mature lipoprotein) and of LolA.</text>
</comment>
<comment type="interaction">
    <interactant intactId="EBI-15765497">
        <id>P0ADC3</id>
    </interactant>
    <interactant intactId="EBI-553532">
        <id>P61316</id>
        <label>lolA</label>
    </interactant>
    <organismsDiffer>false</organismsDiffer>
    <experiments>4</experiments>
</comment>
<comment type="subcellular location">
    <subcellularLocation>
        <location>Cell inner membrane</location>
        <topology>Multi-pass membrane protein</topology>
    </subcellularLocation>
</comment>
<comment type="similarity">
    <text evidence="2">Belongs to the ABC-4 integral membrane protein family. LolC/E subfamily.</text>
</comment>
<feature type="chain" id="PRO_0000201810" description="Lipoprotein-releasing system transmembrane protein LolC">
    <location>
        <begin position="1"/>
        <end position="399"/>
    </location>
</feature>
<feature type="transmembrane region" description="Helical" evidence="1">
    <location>
        <begin position="25"/>
        <end position="45"/>
    </location>
</feature>
<feature type="transmembrane region" description="Helical" evidence="1">
    <location>
        <begin position="270"/>
        <end position="290"/>
    </location>
</feature>
<feature type="transmembrane region" description="Helical" evidence="1">
    <location>
        <begin position="310"/>
        <end position="330"/>
    </location>
</feature>
<feature type="transmembrane region" description="Helical" evidence="1">
    <location>
        <begin position="358"/>
        <end position="378"/>
    </location>
</feature>
<feature type="turn" evidence="6">
    <location>
        <begin position="6"/>
        <end position="13"/>
    </location>
</feature>
<feature type="strand" evidence="5">
    <location>
        <begin position="19"/>
        <end position="22"/>
    </location>
</feature>
<feature type="helix" evidence="6">
    <location>
        <begin position="23"/>
        <end position="27"/>
    </location>
</feature>
<feature type="helix" evidence="3">
    <location>
        <begin position="51"/>
        <end position="58"/>
    </location>
</feature>
<feature type="helix" evidence="3">
    <location>
        <begin position="60"/>
        <end position="62"/>
    </location>
</feature>
<feature type="strand" evidence="3">
    <location>
        <begin position="65"/>
        <end position="73"/>
    </location>
</feature>
<feature type="turn" evidence="3">
    <location>
        <begin position="77"/>
        <end position="79"/>
    </location>
</feature>
<feature type="helix" evidence="3">
    <location>
        <begin position="82"/>
        <end position="84"/>
    </location>
</feature>
<feature type="strand" evidence="3">
    <location>
        <begin position="88"/>
        <end position="104"/>
    </location>
</feature>
<feature type="strand" evidence="3">
    <location>
        <begin position="109"/>
        <end position="117"/>
    </location>
</feature>
<feature type="strand" evidence="7">
    <location>
        <begin position="119"/>
        <end position="121"/>
    </location>
</feature>
<feature type="helix" evidence="3">
    <location>
        <begin position="126"/>
        <end position="128"/>
    </location>
</feature>
<feature type="strand" evidence="3">
    <location>
        <begin position="129"/>
        <end position="131"/>
    </location>
</feature>
<feature type="helix" evidence="3">
    <location>
        <begin position="134"/>
        <end position="136"/>
    </location>
</feature>
<feature type="turn" evidence="4">
    <location>
        <begin position="139"/>
        <end position="141"/>
    </location>
</feature>
<feature type="strand" evidence="3">
    <location>
        <begin position="143"/>
        <end position="147"/>
    </location>
</feature>
<feature type="helix" evidence="3">
    <location>
        <begin position="148"/>
        <end position="154"/>
    </location>
</feature>
<feature type="strand" evidence="5">
    <location>
        <begin position="158"/>
        <end position="160"/>
    </location>
</feature>
<feature type="strand" evidence="3">
    <location>
        <begin position="161"/>
        <end position="171"/>
    </location>
</feature>
<feature type="strand" evidence="6">
    <location>
        <begin position="174"/>
        <end position="176"/>
    </location>
</feature>
<feature type="strand" evidence="3">
    <location>
        <begin position="178"/>
        <end position="190"/>
    </location>
</feature>
<feature type="helix" evidence="3">
    <location>
        <begin position="195"/>
        <end position="198"/>
    </location>
</feature>
<feature type="strand" evidence="3">
    <location>
        <begin position="200"/>
        <end position="204"/>
    </location>
</feature>
<feature type="helix" evidence="3">
    <location>
        <begin position="205"/>
        <end position="211"/>
    </location>
</feature>
<feature type="strand" evidence="7">
    <location>
        <begin position="212"/>
        <end position="214"/>
    </location>
</feature>
<feature type="strand" evidence="3">
    <location>
        <begin position="219"/>
        <end position="227"/>
    </location>
</feature>
<feature type="helix" evidence="3">
    <location>
        <begin position="229"/>
        <end position="231"/>
    </location>
</feature>
<feature type="helix" evidence="3">
    <location>
        <begin position="232"/>
        <end position="235"/>
    </location>
</feature>
<feature type="strand" evidence="6">
    <location>
        <begin position="236"/>
        <end position="238"/>
    </location>
</feature>
<feature type="strand" evidence="3">
    <location>
        <begin position="244"/>
        <end position="248"/>
    </location>
</feature>
<feature type="helix" evidence="3">
    <location>
        <begin position="249"/>
        <end position="251"/>
    </location>
</feature>
<feature type="helix" evidence="3">
    <location>
        <begin position="254"/>
        <end position="266"/>
    </location>
</feature>
<feature type="helix" evidence="6">
    <location>
        <begin position="273"/>
        <end position="292"/>
    </location>
</feature>
<feature type="helix" evidence="6">
    <location>
        <begin position="295"/>
        <end position="303"/>
    </location>
</feature>
<feature type="helix" evidence="6">
    <location>
        <begin position="307"/>
        <end position="311"/>
    </location>
</feature>
<feature type="helix" evidence="6">
    <location>
        <begin position="313"/>
        <end position="317"/>
    </location>
</feature>
<feature type="helix" evidence="6">
    <location>
        <begin position="320"/>
        <end position="338"/>
    </location>
</feature>
<feature type="strand" evidence="6">
    <location>
        <begin position="340"/>
        <end position="344"/>
    </location>
</feature>
<feature type="helix" evidence="7">
    <location>
        <begin position="347"/>
        <end position="350"/>
    </location>
</feature>
<feature type="strand" evidence="5">
    <location>
        <begin position="353"/>
        <end position="355"/>
    </location>
</feature>
<feature type="helix" evidence="6">
    <location>
        <begin position="362"/>
        <end position="378"/>
    </location>
</feature>
<feature type="helix" evidence="6">
    <location>
        <begin position="381"/>
        <end position="388"/>
    </location>
</feature>
<feature type="turn" evidence="6">
    <location>
        <begin position="392"/>
        <end position="394"/>
    </location>
</feature>
<proteinExistence type="evidence at protein level"/>
<organism>
    <name type="scientific">Escherichia coli (strain K12)</name>
    <dbReference type="NCBI Taxonomy" id="83333"/>
    <lineage>
        <taxon>Bacteria</taxon>
        <taxon>Pseudomonadati</taxon>
        <taxon>Pseudomonadota</taxon>
        <taxon>Gammaproteobacteria</taxon>
        <taxon>Enterobacterales</taxon>
        <taxon>Enterobacteriaceae</taxon>
        <taxon>Escherichia</taxon>
    </lineage>
</organism>
<gene>
    <name type="primary">lolC</name>
    <name type="synonym">ycfU</name>
    <name type="ordered locus">b1116</name>
    <name type="ordered locus">JW5161</name>
</gene>
<keyword id="KW-0002">3D-structure</keyword>
<keyword id="KW-0997">Cell inner membrane</keyword>
<keyword id="KW-1003">Cell membrane</keyword>
<keyword id="KW-0903">Direct protein sequencing</keyword>
<keyword id="KW-0472">Membrane</keyword>
<keyword id="KW-1185">Reference proteome</keyword>
<keyword id="KW-0812">Transmembrane</keyword>
<keyword id="KW-1133">Transmembrane helix</keyword>
<keyword id="KW-0813">Transport</keyword>
<reference key="1">
    <citation type="journal article" date="1996" name="DNA Res.">
        <title>A 718-kb DNA sequence of the Escherichia coli K-12 genome corresponding to the 12.7-28.0 min region on the linkage map.</title>
        <authorList>
            <person name="Oshima T."/>
            <person name="Aiba H."/>
            <person name="Baba T."/>
            <person name="Fujita K."/>
            <person name="Hayashi K."/>
            <person name="Honjo A."/>
            <person name="Ikemoto K."/>
            <person name="Inada T."/>
            <person name="Itoh T."/>
            <person name="Kajihara M."/>
            <person name="Kanai K."/>
            <person name="Kashimoto K."/>
            <person name="Kimura S."/>
            <person name="Kitagawa M."/>
            <person name="Makino K."/>
            <person name="Masuda S."/>
            <person name="Miki T."/>
            <person name="Mizobuchi K."/>
            <person name="Mori H."/>
            <person name="Motomura K."/>
            <person name="Nakamura Y."/>
            <person name="Nashimoto H."/>
            <person name="Nishio Y."/>
            <person name="Saito N."/>
            <person name="Sampei G."/>
            <person name="Seki Y."/>
            <person name="Tagami H."/>
            <person name="Takemoto K."/>
            <person name="Wada C."/>
            <person name="Yamamoto Y."/>
            <person name="Yano M."/>
            <person name="Horiuchi T."/>
        </authorList>
    </citation>
    <scope>NUCLEOTIDE SEQUENCE [LARGE SCALE GENOMIC DNA]</scope>
    <source>
        <strain>K12 / W3110 / ATCC 27325 / DSM 5911</strain>
    </source>
</reference>
<reference key="2">
    <citation type="journal article" date="1997" name="Science">
        <title>The complete genome sequence of Escherichia coli K-12.</title>
        <authorList>
            <person name="Blattner F.R."/>
            <person name="Plunkett G. III"/>
            <person name="Bloch C.A."/>
            <person name="Perna N.T."/>
            <person name="Burland V."/>
            <person name="Riley M."/>
            <person name="Collado-Vides J."/>
            <person name="Glasner J.D."/>
            <person name="Rode C.K."/>
            <person name="Mayhew G.F."/>
            <person name="Gregor J."/>
            <person name="Davis N.W."/>
            <person name="Kirkpatrick H.A."/>
            <person name="Goeden M.A."/>
            <person name="Rose D.J."/>
            <person name="Mau B."/>
            <person name="Shao Y."/>
        </authorList>
    </citation>
    <scope>NUCLEOTIDE SEQUENCE [LARGE SCALE GENOMIC DNA]</scope>
    <source>
        <strain>K12 / MG1655 / ATCC 47076</strain>
    </source>
</reference>
<reference key="3">
    <citation type="journal article" date="2006" name="Mol. Syst. Biol.">
        <title>Highly accurate genome sequences of Escherichia coli K-12 strains MG1655 and W3110.</title>
        <authorList>
            <person name="Hayashi K."/>
            <person name="Morooka N."/>
            <person name="Yamamoto Y."/>
            <person name="Fujita K."/>
            <person name="Isono K."/>
            <person name="Choi S."/>
            <person name="Ohtsubo E."/>
            <person name="Baba T."/>
            <person name="Wanner B.L."/>
            <person name="Mori H."/>
            <person name="Horiuchi T."/>
        </authorList>
    </citation>
    <scope>NUCLEOTIDE SEQUENCE [LARGE SCALE GENOMIC DNA]</scope>
    <source>
        <strain>K12 / W3110 / ATCC 27325 / DSM 5911</strain>
    </source>
</reference>
<reference key="4">
    <citation type="journal article" date="2000" name="Nat. Cell Biol.">
        <title>A new ABC transporter mediating the detachment of lipid-modified proteins from membranes.</title>
        <authorList>
            <person name="Yakushi T."/>
            <person name="Masuda K."/>
            <person name="Narita S."/>
            <person name="Matsuyama S."/>
            <person name="Tokuda H."/>
        </authorList>
    </citation>
    <scope>PROTEIN SEQUENCE OF 1-10</scope>
    <scope>CHARACTERIZATION</scope>
</reference>
<accession>P0ADC3</accession>
<accession>P75956</accession>
<accession>Q9R7N7</accession>